<geneLocation type="mitochondrion"/>
<evidence type="ECO:0000250" key="1"/>
<evidence type="ECO:0000250" key="2">
    <source>
        <dbReference type="UniProtKB" id="P00157"/>
    </source>
</evidence>
<evidence type="ECO:0000255" key="3">
    <source>
        <dbReference type="PROSITE-ProRule" id="PRU00967"/>
    </source>
</evidence>
<evidence type="ECO:0000255" key="4">
    <source>
        <dbReference type="PROSITE-ProRule" id="PRU00968"/>
    </source>
</evidence>
<name>CYB_XERTE</name>
<feature type="chain" id="PRO_0000061604" description="Cytochrome b">
    <location>
        <begin position="1"/>
        <end position="379"/>
    </location>
</feature>
<feature type="transmembrane region" description="Helical" evidence="2">
    <location>
        <begin position="33"/>
        <end position="53"/>
    </location>
</feature>
<feature type="transmembrane region" description="Helical" evidence="2">
    <location>
        <begin position="77"/>
        <end position="98"/>
    </location>
</feature>
<feature type="transmembrane region" description="Helical" evidence="2">
    <location>
        <begin position="113"/>
        <end position="133"/>
    </location>
</feature>
<feature type="transmembrane region" description="Helical" evidence="2">
    <location>
        <begin position="178"/>
        <end position="198"/>
    </location>
</feature>
<feature type="transmembrane region" description="Helical" evidence="2">
    <location>
        <begin position="226"/>
        <end position="246"/>
    </location>
</feature>
<feature type="transmembrane region" description="Helical" evidence="2">
    <location>
        <begin position="288"/>
        <end position="308"/>
    </location>
</feature>
<feature type="transmembrane region" description="Helical" evidence="2">
    <location>
        <begin position="320"/>
        <end position="340"/>
    </location>
</feature>
<feature type="transmembrane region" description="Helical" evidence="2">
    <location>
        <begin position="347"/>
        <end position="367"/>
    </location>
</feature>
<feature type="binding site" description="axial binding residue" evidence="2">
    <location>
        <position position="83"/>
    </location>
    <ligand>
        <name>heme b</name>
        <dbReference type="ChEBI" id="CHEBI:60344"/>
        <label>b562</label>
    </ligand>
    <ligandPart>
        <name>Fe</name>
        <dbReference type="ChEBI" id="CHEBI:18248"/>
    </ligandPart>
</feature>
<feature type="binding site" description="axial binding residue" evidence="2">
    <location>
        <position position="97"/>
    </location>
    <ligand>
        <name>heme b</name>
        <dbReference type="ChEBI" id="CHEBI:60344"/>
        <label>b566</label>
    </ligand>
    <ligandPart>
        <name>Fe</name>
        <dbReference type="ChEBI" id="CHEBI:18248"/>
    </ligandPart>
</feature>
<feature type="binding site" description="axial binding residue" evidence="2">
    <location>
        <position position="182"/>
    </location>
    <ligand>
        <name>heme b</name>
        <dbReference type="ChEBI" id="CHEBI:60344"/>
        <label>b562</label>
    </ligand>
    <ligandPart>
        <name>Fe</name>
        <dbReference type="ChEBI" id="CHEBI:18248"/>
    </ligandPart>
</feature>
<feature type="binding site" description="axial binding residue" evidence="2">
    <location>
        <position position="196"/>
    </location>
    <ligand>
        <name>heme b</name>
        <dbReference type="ChEBI" id="CHEBI:60344"/>
        <label>b566</label>
    </ligand>
    <ligandPart>
        <name>Fe</name>
        <dbReference type="ChEBI" id="CHEBI:18248"/>
    </ligandPart>
</feature>
<feature type="binding site" evidence="2">
    <location>
        <position position="201"/>
    </location>
    <ligand>
        <name>a ubiquinone</name>
        <dbReference type="ChEBI" id="CHEBI:16389"/>
    </ligand>
</feature>
<organism>
    <name type="scientific">Xerospermophilus tereticaudus</name>
    <name type="common">Round-tailed ground squirrel</name>
    <name type="synonym">Spermophilus tereticaudus</name>
    <dbReference type="NCBI Taxonomy" id="99860"/>
    <lineage>
        <taxon>Eukaryota</taxon>
        <taxon>Metazoa</taxon>
        <taxon>Chordata</taxon>
        <taxon>Craniata</taxon>
        <taxon>Vertebrata</taxon>
        <taxon>Euteleostomi</taxon>
        <taxon>Mammalia</taxon>
        <taxon>Eutheria</taxon>
        <taxon>Euarchontoglires</taxon>
        <taxon>Glires</taxon>
        <taxon>Rodentia</taxon>
        <taxon>Sciuromorpha</taxon>
        <taxon>Sciuridae</taxon>
        <taxon>Xerinae</taxon>
        <taxon>Marmotini</taxon>
        <taxon>Xerospermophilus</taxon>
    </lineage>
</organism>
<comment type="function">
    <text evidence="2">Component of the ubiquinol-cytochrome c reductase complex (complex III or cytochrome b-c1 complex) that is part of the mitochondrial respiratory chain. The b-c1 complex mediates electron transfer from ubiquinol to cytochrome c. Contributes to the generation of a proton gradient across the mitochondrial membrane that is then used for ATP synthesis.</text>
</comment>
<comment type="cofactor">
    <cofactor evidence="2">
        <name>heme b</name>
        <dbReference type="ChEBI" id="CHEBI:60344"/>
    </cofactor>
    <text evidence="2">Binds 2 heme b groups non-covalently.</text>
</comment>
<comment type="subunit">
    <text evidence="2">The cytochrome bc1 complex contains 11 subunits: 3 respiratory subunits (MT-CYB, CYC1 and UQCRFS1), 2 core proteins (UQCRC1 and UQCRC2) and 6 low-molecular weight proteins (UQCRH/QCR6, UQCRB/QCR7, UQCRQ/QCR8, UQCR10/QCR9, UQCR11/QCR10 and a cleavage product of UQCRFS1). This cytochrome bc1 complex then forms a dimer.</text>
</comment>
<comment type="subcellular location">
    <subcellularLocation>
        <location evidence="2">Mitochondrion inner membrane</location>
        <topology evidence="2">Multi-pass membrane protein</topology>
    </subcellularLocation>
</comment>
<comment type="miscellaneous">
    <text evidence="1">Heme 1 (or BL or b562) is low-potential and absorbs at about 562 nm, and heme 2 (or BH or b566) is high-potential and absorbs at about 566 nm.</text>
</comment>
<comment type="similarity">
    <text evidence="3 4">Belongs to the cytochrome b family.</text>
</comment>
<comment type="caution">
    <text evidence="2">The full-length protein contains only eight transmembrane helices, not nine as predicted by bioinformatics tools.</text>
</comment>
<protein>
    <recommendedName>
        <fullName>Cytochrome b</fullName>
    </recommendedName>
    <alternativeName>
        <fullName>Complex III subunit 3</fullName>
    </alternativeName>
    <alternativeName>
        <fullName>Complex III subunit III</fullName>
    </alternativeName>
    <alternativeName>
        <fullName>Cytochrome b-c1 complex subunit 3</fullName>
    </alternativeName>
    <alternativeName>
        <fullName>Ubiquinol-cytochrome-c reductase complex cytochrome b subunit</fullName>
    </alternativeName>
</protein>
<accession>Q9TF17</accession>
<reference key="1">
    <citation type="submission" date="1999-06" db="EMBL/GenBank/DDBJ databases">
        <title>A molecular phylogeny of ground squirrels and prairie dogs.</title>
        <authorList>
            <person name="Harrison R.G."/>
            <person name="Sherman P.W."/>
            <person name="Yensen E."/>
            <person name="Hoffmann R.S."/>
            <person name="Bogdanowicz S.M."/>
        </authorList>
    </citation>
    <scope>NUCLEOTIDE SEQUENCE [GENOMIC DNA]</scope>
    <source>
        <strain>Isolate S92</strain>
    </source>
</reference>
<dbReference type="EMBL" id="AF157941">
    <property type="protein sequence ID" value="AAD50225.1"/>
    <property type="molecule type" value="Genomic_DNA"/>
</dbReference>
<dbReference type="SMR" id="Q9TF17"/>
<dbReference type="GO" id="GO:0005743">
    <property type="term" value="C:mitochondrial inner membrane"/>
    <property type="evidence" value="ECO:0007669"/>
    <property type="project" value="UniProtKB-SubCell"/>
</dbReference>
<dbReference type="GO" id="GO:0045275">
    <property type="term" value="C:respiratory chain complex III"/>
    <property type="evidence" value="ECO:0007669"/>
    <property type="project" value="InterPro"/>
</dbReference>
<dbReference type="GO" id="GO:0046872">
    <property type="term" value="F:metal ion binding"/>
    <property type="evidence" value="ECO:0007669"/>
    <property type="project" value="UniProtKB-KW"/>
</dbReference>
<dbReference type="GO" id="GO:0008121">
    <property type="term" value="F:ubiquinol-cytochrome-c reductase activity"/>
    <property type="evidence" value="ECO:0007669"/>
    <property type="project" value="InterPro"/>
</dbReference>
<dbReference type="GO" id="GO:0006122">
    <property type="term" value="P:mitochondrial electron transport, ubiquinol to cytochrome c"/>
    <property type="evidence" value="ECO:0007669"/>
    <property type="project" value="TreeGrafter"/>
</dbReference>
<dbReference type="CDD" id="cd00290">
    <property type="entry name" value="cytochrome_b_C"/>
    <property type="match status" value="1"/>
</dbReference>
<dbReference type="CDD" id="cd00284">
    <property type="entry name" value="Cytochrome_b_N"/>
    <property type="match status" value="1"/>
</dbReference>
<dbReference type="FunFam" id="1.20.810.10:FF:000002">
    <property type="entry name" value="Cytochrome b"/>
    <property type="match status" value="1"/>
</dbReference>
<dbReference type="Gene3D" id="1.20.810.10">
    <property type="entry name" value="Cytochrome Bc1 Complex, Chain C"/>
    <property type="match status" value="1"/>
</dbReference>
<dbReference type="InterPro" id="IPR005798">
    <property type="entry name" value="Cyt_b/b6_C"/>
</dbReference>
<dbReference type="InterPro" id="IPR036150">
    <property type="entry name" value="Cyt_b/b6_C_sf"/>
</dbReference>
<dbReference type="InterPro" id="IPR005797">
    <property type="entry name" value="Cyt_b/b6_N"/>
</dbReference>
<dbReference type="InterPro" id="IPR027387">
    <property type="entry name" value="Cytb/b6-like_sf"/>
</dbReference>
<dbReference type="InterPro" id="IPR030689">
    <property type="entry name" value="Cytochrome_b"/>
</dbReference>
<dbReference type="InterPro" id="IPR048260">
    <property type="entry name" value="Cytochrome_b_C_euk/bac"/>
</dbReference>
<dbReference type="InterPro" id="IPR048259">
    <property type="entry name" value="Cytochrome_b_N_euk/bac"/>
</dbReference>
<dbReference type="InterPro" id="IPR016174">
    <property type="entry name" value="Di-haem_cyt_TM"/>
</dbReference>
<dbReference type="PANTHER" id="PTHR19271">
    <property type="entry name" value="CYTOCHROME B"/>
    <property type="match status" value="1"/>
</dbReference>
<dbReference type="PANTHER" id="PTHR19271:SF16">
    <property type="entry name" value="CYTOCHROME B"/>
    <property type="match status" value="1"/>
</dbReference>
<dbReference type="Pfam" id="PF00032">
    <property type="entry name" value="Cytochrom_B_C"/>
    <property type="match status" value="1"/>
</dbReference>
<dbReference type="Pfam" id="PF00033">
    <property type="entry name" value="Cytochrome_B"/>
    <property type="match status" value="1"/>
</dbReference>
<dbReference type="PIRSF" id="PIRSF038885">
    <property type="entry name" value="COB"/>
    <property type="match status" value="1"/>
</dbReference>
<dbReference type="SUPFAM" id="SSF81648">
    <property type="entry name" value="a domain/subunit of cytochrome bc1 complex (Ubiquinol-cytochrome c reductase)"/>
    <property type="match status" value="1"/>
</dbReference>
<dbReference type="SUPFAM" id="SSF81342">
    <property type="entry name" value="Transmembrane di-heme cytochromes"/>
    <property type="match status" value="1"/>
</dbReference>
<dbReference type="PROSITE" id="PS51003">
    <property type="entry name" value="CYTB_CTER"/>
    <property type="match status" value="1"/>
</dbReference>
<dbReference type="PROSITE" id="PS51002">
    <property type="entry name" value="CYTB_NTER"/>
    <property type="match status" value="1"/>
</dbReference>
<sequence length="379" mass="42774">MTNTRKTHPLIKIINHSFIDLPAPSNISAWWNFGSLLGLCLAIQILTGLFLAMHYTPDTMTAFSSVTHICRDVNYGWLIRYMHANGASMFFICLFLHVGRGMYYGSYTYFETWNIGVILLFAIMATAFMGYVLPWGQMSFWGATVITNLLSAIPYIGTTLVEWIWGGFSVDKATLTRFFAFHFILPFIIAALVMVHLLFLHETGSNNPSGLVSDSDKIPFHPYYTIKDALGILFLITALMTLVLFSPDLLGDPDNYTPANPLSTPPHIKPEWYFLFAYAILRSIPNKLGGVLALVFSILILTLFPLLHLSKQRSMMFRPLSQCIFWILVADLFTLTWIGGQPVEYPFITIGQLASVLYFSIILLILPAASLIENKLLKW</sequence>
<keyword id="KW-0249">Electron transport</keyword>
<keyword id="KW-0349">Heme</keyword>
<keyword id="KW-0408">Iron</keyword>
<keyword id="KW-0472">Membrane</keyword>
<keyword id="KW-0479">Metal-binding</keyword>
<keyword id="KW-0496">Mitochondrion</keyword>
<keyword id="KW-0999">Mitochondrion inner membrane</keyword>
<keyword id="KW-0679">Respiratory chain</keyword>
<keyword id="KW-0812">Transmembrane</keyword>
<keyword id="KW-1133">Transmembrane helix</keyword>
<keyword id="KW-0813">Transport</keyword>
<keyword id="KW-0830">Ubiquinone</keyword>
<proteinExistence type="inferred from homology"/>
<gene>
    <name type="primary">MT-CYB</name>
    <name type="synonym">COB</name>
    <name type="synonym">CYTB</name>
    <name type="synonym">MTCYB</name>
</gene>